<proteinExistence type="inferred from homology"/>
<protein>
    <recommendedName>
        <fullName>Uncharacterized epimerase/dehydratase MW0508</fullName>
    </recommendedName>
</protein>
<accession>Q7A1Q7</accession>
<feature type="chain" id="PRO_0000270850" description="Uncharacterized epimerase/dehydratase MW0508">
    <location>
        <begin position="1"/>
        <end position="321"/>
    </location>
</feature>
<evidence type="ECO:0000305" key="1"/>
<comment type="similarity">
    <text evidence="1">Belongs to the NAD(P)-dependent epimerase/dehydratase family.</text>
</comment>
<reference key="1">
    <citation type="journal article" date="2002" name="Lancet">
        <title>Genome and virulence determinants of high virulence community-acquired MRSA.</title>
        <authorList>
            <person name="Baba T."/>
            <person name="Takeuchi F."/>
            <person name="Kuroda M."/>
            <person name="Yuzawa H."/>
            <person name="Aoki K."/>
            <person name="Oguchi A."/>
            <person name="Nagai Y."/>
            <person name="Iwama N."/>
            <person name="Asano K."/>
            <person name="Naimi T."/>
            <person name="Kuroda H."/>
            <person name="Cui L."/>
            <person name="Yamamoto K."/>
            <person name="Hiramatsu K."/>
        </authorList>
    </citation>
    <scope>NUCLEOTIDE SEQUENCE [LARGE SCALE GENOMIC DNA]</scope>
    <source>
        <strain>MW2</strain>
    </source>
</reference>
<sequence length="321" mass="36053">MKKIMITGALGQIGTELVVKCREIYGTDNVLATDIREPEADSPVQNGPFEILDVTDRDRMFELVRDFEADSLMHMAALLSATAEKNPILAWDLNMGGLMNALEAARTYNLHFFTPSSIGAFGDSTPKVNTPQVTIQQPTTMYGVNKVAGELLCQYYFKRFGVDTRSVRFPGLISHVKEPGGGTTDYAVEIYFKAVREGHYTSFIDKGTYMDMMYMDDAIEAIIKLMEADDAKLETRNGYNLSAMSFDPEMVKEAIQEYYPNFTLDYDVDPIRQGIANSWPDSIDTSCSRGEWGFDPKYDLASMTKLMLEAIEQKDTVKNNN</sequence>
<organism>
    <name type="scientific">Staphylococcus aureus (strain MW2)</name>
    <dbReference type="NCBI Taxonomy" id="196620"/>
    <lineage>
        <taxon>Bacteria</taxon>
        <taxon>Bacillati</taxon>
        <taxon>Bacillota</taxon>
        <taxon>Bacilli</taxon>
        <taxon>Bacillales</taxon>
        <taxon>Staphylococcaceae</taxon>
        <taxon>Staphylococcus</taxon>
    </lineage>
</organism>
<name>Y508_STAAW</name>
<gene>
    <name type="ordered locus">MW0508</name>
</gene>
<dbReference type="EMBL" id="BA000033">
    <property type="protein sequence ID" value="BAB94373.1"/>
    <property type="molecule type" value="Genomic_DNA"/>
</dbReference>
<dbReference type="RefSeq" id="WP_000723301.1">
    <property type="nucleotide sequence ID" value="NC_003923.1"/>
</dbReference>
<dbReference type="SMR" id="Q7A1Q7"/>
<dbReference type="KEGG" id="sam:MW0508"/>
<dbReference type="HOGENOM" id="CLU_007383_19_1_9"/>
<dbReference type="GO" id="GO:0008743">
    <property type="term" value="F:L-threonine 3-dehydrogenase activity"/>
    <property type="evidence" value="ECO:0007669"/>
    <property type="project" value="TreeGrafter"/>
</dbReference>
<dbReference type="GO" id="GO:0006567">
    <property type="term" value="P:threonine catabolic process"/>
    <property type="evidence" value="ECO:0007669"/>
    <property type="project" value="TreeGrafter"/>
</dbReference>
<dbReference type="FunFam" id="3.40.50.720:FF:000077">
    <property type="entry name" value="L-threonine 3-dehydrogenase, mitochondrial"/>
    <property type="match status" value="1"/>
</dbReference>
<dbReference type="Gene3D" id="3.40.50.720">
    <property type="entry name" value="NAD(P)-binding Rossmann-like Domain"/>
    <property type="match status" value="1"/>
</dbReference>
<dbReference type="InterPro" id="IPR001509">
    <property type="entry name" value="Epimerase_deHydtase"/>
</dbReference>
<dbReference type="InterPro" id="IPR036291">
    <property type="entry name" value="NAD(P)-bd_dom_sf"/>
</dbReference>
<dbReference type="InterPro" id="IPR051225">
    <property type="entry name" value="NAD(P)_epim/dehydratase"/>
</dbReference>
<dbReference type="PANTHER" id="PTHR42687">
    <property type="entry name" value="L-THREONINE 3-DEHYDROGENASE"/>
    <property type="match status" value="1"/>
</dbReference>
<dbReference type="PANTHER" id="PTHR42687:SF1">
    <property type="entry name" value="L-THREONINE 3-DEHYDROGENASE, MITOCHONDRIAL"/>
    <property type="match status" value="1"/>
</dbReference>
<dbReference type="Pfam" id="PF01370">
    <property type="entry name" value="Epimerase"/>
    <property type="match status" value="1"/>
</dbReference>
<dbReference type="SUPFAM" id="SSF51735">
    <property type="entry name" value="NAD(P)-binding Rossmann-fold domains"/>
    <property type="match status" value="1"/>
</dbReference>